<feature type="chain" id="PRO_0000205639" description="Tropomyosin alpha-1 chain">
    <location>
        <begin position="1"/>
        <end position="284"/>
    </location>
</feature>
<feature type="region of interest" description="Disordered" evidence="4">
    <location>
        <begin position="1"/>
        <end position="37"/>
    </location>
</feature>
<feature type="coiled-coil region" evidence="1">
    <location>
        <begin position="1"/>
        <end position="284"/>
    </location>
</feature>
<feature type="compositionally biased region" description="Basic and acidic residues" evidence="4">
    <location>
        <begin position="12"/>
        <end position="37"/>
    </location>
</feature>
<organism>
    <name type="scientific">Danio rerio</name>
    <name type="common">Zebrafish</name>
    <name type="synonym">Brachydanio rerio</name>
    <dbReference type="NCBI Taxonomy" id="7955"/>
    <lineage>
        <taxon>Eukaryota</taxon>
        <taxon>Metazoa</taxon>
        <taxon>Chordata</taxon>
        <taxon>Craniata</taxon>
        <taxon>Vertebrata</taxon>
        <taxon>Euteleostomi</taxon>
        <taxon>Actinopterygii</taxon>
        <taxon>Neopterygii</taxon>
        <taxon>Teleostei</taxon>
        <taxon>Ostariophysi</taxon>
        <taxon>Cypriniformes</taxon>
        <taxon>Danionidae</taxon>
        <taxon>Danioninae</taxon>
        <taxon>Danio</taxon>
    </lineage>
</organism>
<evidence type="ECO:0000250" key="1"/>
<evidence type="ECO:0000250" key="2">
    <source>
        <dbReference type="UniProtKB" id="P04692"/>
    </source>
</evidence>
<evidence type="ECO:0000250" key="3">
    <source>
        <dbReference type="UniProtKB" id="P09493"/>
    </source>
</evidence>
<evidence type="ECO:0000256" key="4">
    <source>
        <dbReference type="SAM" id="MobiDB-lite"/>
    </source>
</evidence>
<evidence type="ECO:0000305" key="5"/>
<proteinExistence type="evidence at transcript level"/>
<protein>
    <recommendedName>
        <fullName>Tropomyosin alpha-1 chain</fullName>
    </recommendedName>
    <alternativeName>
        <fullName>Alpha-tropomyosin</fullName>
    </alternativeName>
    <alternativeName>
        <fullName>Tropomyosin-1</fullName>
    </alternativeName>
</protein>
<comment type="function">
    <text evidence="3">Binds to actin filaments in muscle and non-muscle cells. Plays a central role, in association with the troponin complex, in the calcium dependent regulation of vertebrate striated muscle contraction. Smooth muscle contraction is regulated by interaction with caldesmon. In non-muscle cells is implicated in stabilizing cytoskeleton actin filaments.</text>
</comment>
<comment type="subunit">
    <text evidence="2">Homodimer. Heterodimer of an alpha (TPM1, TPM3 or TPM4) and a beta (TPM2) chain.</text>
</comment>
<comment type="subcellular location">
    <subcellularLocation>
        <location evidence="2">Cytoplasm</location>
        <location evidence="2">Cytoskeleton</location>
    </subcellularLocation>
    <text evidence="2">Associates with F-actin stress fibers.</text>
</comment>
<comment type="domain">
    <text>The molecule is in a coiled coil structure that is formed by 2 polypeptide chains. The sequence exhibits a prominent seven-residues periodicity.</text>
</comment>
<comment type="similarity">
    <text evidence="5">Belongs to the tropomyosin family.</text>
</comment>
<sequence length="284" mass="32723">MDAIKKKMQMLKLDKENALDRAEQAETDKKAAEERSKQLEDDLVALQKKLKATEDELDKYSEALKDAQEKLELAEKKATDAEGDVASLNRRIQLVEEELDRAQERLATALQKLEEAEKAADESERGMKVIENRALKDEEKMELQEIQLKEAKHIAEEADRKYEEVARKLVIVEGELERTEERAELNEGKCSELEEELKTVTNNMKSLEAQAEKYSAKEDKYEEEIKVLTDKLKEAETRAEFAERSVAKLEKTIDDLEDELYAQKLKYKAISEELDHALNDMTSI</sequence>
<accession>P13104</accession>
<keyword id="KW-0009">Actin-binding</keyword>
<keyword id="KW-0175">Coiled coil</keyword>
<keyword id="KW-0963">Cytoplasm</keyword>
<keyword id="KW-0206">Cytoskeleton</keyword>
<keyword id="KW-0514">Muscle protein</keyword>
<keyword id="KW-1185">Reference proteome</keyword>
<name>TPM1_DANRE</name>
<dbReference type="EMBL" id="M24635">
    <property type="protein sequence ID" value="AAA50021.1"/>
    <property type="molecule type" value="mRNA"/>
</dbReference>
<dbReference type="EMBL" id="AF180892">
    <property type="protein sequence ID" value="AAF78475.1"/>
    <property type="molecule type" value="mRNA"/>
</dbReference>
<dbReference type="EMBL" id="BC062870">
    <property type="protein sequence ID" value="AAH62870.1"/>
    <property type="molecule type" value="mRNA"/>
</dbReference>
<dbReference type="PIR" id="I51731">
    <property type="entry name" value="I51731"/>
</dbReference>
<dbReference type="RefSeq" id="NP_571180.1">
    <property type="nucleotide sequence ID" value="NM_131105.2"/>
</dbReference>
<dbReference type="SMR" id="P13104"/>
<dbReference type="FunCoup" id="P13104">
    <property type="interactions" value="1708"/>
</dbReference>
<dbReference type="STRING" id="7955.ENSDARP00000142967"/>
<dbReference type="PaxDb" id="7955-ENSDARP00000039656"/>
<dbReference type="Ensembl" id="ENSDART00000173453">
    <property type="protein sequence ID" value="ENSDARP00000142967"/>
    <property type="gene ID" value="ENSDARG00000033683"/>
</dbReference>
<dbReference type="GeneID" id="30324"/>
<dbReference type="KEGG" id="dre:30324"/>
<dbReference type="AGR" id="ZFIN:ZDB-GENE-990415-269"/>
<dbReference type="CTD" id="30324"/>
<dbReference type="ZFIN" id="ZDB-GENE-990415-269">
    <property type="gene designation" value="tpma"/>
</dbReference>
<dbReference type="eggNOG" id="KOG1003">
    <property type="taxonomic scope" value="Eukaryota"/>
</dbReference>
<dbReference type="HOGENOM" id="CLU_055027_0_0_1"/>
<dbReference type="InParanoid" id="P13104"/>
<dbReference type="OMA" id="EEMDHAP"/>
<dbReference type="OrthoDB" id="128924at2759"/>
<dbReference type="PhylomeDB" id="P13104"/>
<dbReference type="TreeFam" id="TF351519"/>
<dbReference type="PRO" id="PR:P13104"/>
<dbReference type="Proteomes" id="UP000000437">
    <property type="component" value="Chromosome 7"/>
</dbReference>
<dbReference type="Bgee" id="ENSDARG00000033683">
    <property type="expression patterns" value="Expressed in bone element and 33 other cell types or tissues"/>
</dbReference>
<dbReference type="ExpressionAtlas" id="P13104">
    <property type="expression patterns" value="baseline"/>
</dbReference>
<dbReference type="GO" id="GO:0015629">
    <property type="term" value="C:actin cytoskeleton"/>
    <property type="evidence" value="ECO:0000250"/>
    <property type="project" value="UniProtKB"/>
</dbReference>
<dbReference type="GO" id="GO:0005884">
    <property type="term" value="C:actin filament"/>
    <property type="evidence" value="ECO:0000318"/>
    <property type="project" value="GO_Central"/>
</dbReference>
<dbReference type="GO" id="GO:0005737">
    <property type="term" value="C:cytoplasm"/>
    <property type="evidence" value="ECO:0007669"/>
    <property type="project" value="UniProtKB-KW"/>
</dbReference>
<dbReference type="GO" id="GO:0051015">
    <property type="term" value="F:actin filament binding"/>
    <property type="evidence" value="ECO:0000250"/>
    <property type="project" value="UniProtKB"/>
</dbReference>
<dbReference type="GO" id="GO:0042802">
    <property type="term" value="F:identical protein binding"/>
    <property type="evidence" value="ECO:0000250"/>
    <property type="project" value="UniProtKB"/>
</dbReference>
<dbReference type="GO" id="GO:0046982">
    <property type="term" value="F:protein heterodimerization activity"/>
    <property type="evidence" value="ECO:0000250"/>
    <property type="project" value="UniProtKB"/>
</dbReference>
<dbReference type="GO" id="GO:0042803">
    <property type="term" value="F:protein homodimerization activity"/>
    <property type="evidence" value="ECO:0000250"/>
    <property type="project" value="UniProtKB"/>
</dbReference>
<dbReference type="GO" id="GO:0007015">
    <property type="term" value="P:actin filament organization"/>
    <property type="evidence" value="ECO:0000318"/>
    <property type="project" value="GO_Central"/>
</dbReference>
<dbReference type="GO" id="GO:0060048">
    <property type="term" value="P:cardiac muscle contraction"/>
    <property type="evidence" value="ECO:0000318"/>
    <property type="project" value="GO_Central"/>
</dbReference>
<dbReference type="GO" id="GO:0061515">
    <property type="term" value="P:myeloid cell development"/>
    <property type="evidence" value="ECO:0000315"/>
    <property type="project" value="ZFIN"/>
</dbReference>
<dbReference type="FunFam" id="1.20.5.170:FF:000005">
    <property type="entry name" value="Tropomyosin alpha-1 chain"/>
    <property type="match status" value="1"/>
</dbReference>
<dbReference type="FunFam" id="1.20.5.170:FF:000001">
    <property type="entry name" value="Tropomyosin alpha-1 chain isoform 1"/>
    <property type="match status" value="1"/>
</dbReference>
<dbReference type="FunFam" id="1.20.5.340:FF:000001">
    <property type="entry name" value="Tropomyosin alpha-1 chain isoform 2"/>
    <property type="match status" value="1"/>
</dbReference>
<dbReference type="Gene3D" id="1.20.5.170">
    <property type="match status" value="2"/>
</dbReference>
<dbReference type="Gene3D" id="1.20.5.340">
    <property type="match status" value="1"/>
</dbReference>
<dbReference type="InterPro" id="IPR000533">
    <property type="entry name" value="Tropomyosin"/>
</dbReference>
<dbReference type="PANTHER" id="PTHR19269">
    <property type="entry name" value="TROPOMYOSIN"/>
    <property type="match status" value="1"/>
</dbReference>
<dbReference type="Pfam" id="PF00261">
    <property type="entry name" value="Tropomyosin"/>
    <property type="match status" value="1"/>
</dbReference>
<dbReference type="PRINTS" id="PR00194">
    <property type="entry name" value="TROPOMYOSIN"/>
</dbReference>
<dbReference type="SUPFAM" id="SSF57997">
    <property type="entry name" value="Tropomyosin"/>
    <property type="match status" value="1"/>
</dbReference>
<dbReference type="PROSITE" id="PS00326">
    <property type="entry name" value="TROPOMYOSIN"/>
    <property type="match status" value="1"/>
</dbReference>
<gene>
    <name type="primary">tpma</name>
    <name type="synonym">tpm1</name>
</gene>
<reference key="1">
    <citation type="journal article" date="1989" name="Proc. Natl. Acad. Sci. U.S.A.">
        <title>One-sided polymerase chain reaction: the amplification of cDNA.</title>
        <authorList>
            <person name="Ohara O."/>
            <person name="Dorit R.L."/>
            <person name="Gilbert W."/>
        </authorList>
    </citation>
    <scope>NUCLEOTIDE SEQUENCE [MRNA]</scope>
</reference>
<reference key="2">
    <citation type="journal article" date="2000" name="Dev. Dyn.">
        <title>Asynchronous activation of 10 muscle-specific protein (MSP) genes during zebrafish somitogenesis.</title>
        <authorList>
            <person name="Xu Y."/>
            <person name="He J."/>
            <person name="Wang X."/>
            <person name="Lim T.M."/>
            <person name="Gong Z."/>
        </authorList>
    </citation>
    <scope>NUCLEOTIDE SEQUENCE [MRNA]</scope>
</reference>
<reference key="3">
    <citation type="submission" date="2003-11" db="EMBL/GenBank/DDBJ databases">
        <authorList>
            <consortium name="NIH - Zebrafish Gene Collection (ZGC) project"/>
        </authorList>
    </citation>
    <scope>NUCLEOTIDE SEQUENCE [LARGE SCALE MRNA]</scope>
    <source>
        <strain>AB</strain>
    </source>
</reference>